<organism>
    <name type="scientific">Phaedon cochleariae</name>
    <name type="common">Mustard beetle</name>
    <dbReference type="NCBI Taxonomy" id="80249"/>
    <lineage>
        <taxon>Eukaryota</taxon>
        <taxon>Metazoa</taxon>
        <taxon>Ecdysozoa</taxon>
        <taxon>Arthropoda</taxon>
        <taxon>Hexapoda</taxon>
        <taxon>Insecta</taxon>
        <taxon>Pterygota</taxon>
        <taxon>Neoptera</taxon>
        <taxon>Endopterygota</taxon>
        <taxon>Coleoptera</taxon>
        <taxon>Polyphaga</taxon>
        <taxon>Cucujiformia</taxon>
        <taxon>Chrysomeloidea</taxon>
        <taxon>Chrysomelidae</taxon>
        <taxon>Chrysomelinae</taxon>
        <taxon>Chrysomelini</taxon>
        <taxon>Phaedon</taxon>
    </lineage>
</organism>
<comment type="tissue specificity">
    <text evidence="6">Expressed in larval carcasses and gut, and adult gut.</text>
</comment>
<comment type="developmental stage">
    <text evidence="6">Larvae and adult, but not eggs.</text>
</comment>
<comment type="similarity">
    <text evidence="3 4 5">Belongs to the peptidase C1 family.</text>
</comment>
<proteinExistence type="evidence at transcript level"/>
<reference key="1">
    <citation type="journal article" date="1999" name="Insect Biochem. Mol. Biol.">
        <title>Molecular cloning of cDNAs encoding a range of digestive enzymes from a phytophagous beetle, Phaedon cochleariae.</title>
        <authorList>
            <person name="Girard C."/>
            <person name="Jouanin L."/>
        </authorList>
    </citation>
    <scope>NUCLEOTIDE SEQUENCE [MRNA]</scope>
    <scope>TISSUE SPECIFICITY</scope>
    <scope>DEVELOPMENTAL STAGE</scope>
    <source>
        <tissue>Larval gut</tissue>
    </source>
</reference>
<accession>O97397</accession>
<accession>P81520</accession>
<sequence length="324" mass="35468">MKLIIALAALIVVINAASDQELWADFKKTHARTYKSLREEKLRFNIFQDTLRQIAEHNVKYENGESTYYLAINKFSDITDEEFRDMLMKNEASRPNLEGLEVADLTVGAAPESIDWRSKGVVLPVRNQGECGSCWALSTAAAIESQSAIKSGSKVPLSPQQLVDCSTSYGNHGCNGGFAVNGFEYVKDNGLESDADYPYSGKEDKCKANDKSRSVVELTGYKKVTASETSLKEAVGTIGPISAVVFGKPMKSYGGGIFDDSSCLGDNLHHGVNVVGYGIENGQKYWIIKNTWGADWGESGYIRLIRDTDHSCGVEKMASYPILA</sequence>
<evidence type="ECO:0000250" key="1"/>
<evidence type="ECO:0000255" key="2"/>
<evidence type="ECO:0000255" key="3">
    <source>
        <dbReference type="PROSITE-ProRule" id="PRU10088"/>
    </source>
</evidence>
<evidence type="ECO:0000255" key="4">
    <source>
        <dbReference type="PROSITE-ProRule" id="PRU10089"/>
    </source>
</evidence>
<evidence type="ECO:0000255" key="5">
    <source>
        <dbReference type="PROSITE-ProRule" id="PRU10090"/>
    </source>
</evidence>
<evidence type="ECO:0000269" key="6">
    <source>
    </source>
</evidence>
<name>CATLL_PHACE</name>
<protein>
    <recommendedName>
        <fullName>Cathepsin L-like proteinase</fullName>
        <ecNumber>3.4.22.-</ecNumber>
    </recommendedName>
</protein>
<dbReference type="EC" id="3.4.22.-"/>
<dbReference type="EMBL" id="Y17903">
    <property type="protein sequence ID" value="CAA76927.1"/>
    <property type="molecule type" value="mRNA"/>
</dbReference>
<dbReference type="SMR" id="O97397"/>
<dbReference type="MEROPS" id="C01.143"/>
<dbReference type="OrthoDB" id="10253408at2759"/>
<dbReference type="GO" id="GO:0008234">
    <property type="term" value="F:cysteine-type peptidase activity"/>
    <property type="evidence" value="ECO:0007669"/>
    <property type="project" value="UniProtKB-KW"/>
</dbReference>
<dbReference type="GO" id="GO:0007586">
    <property type="term" value="P:digestion"/>
    <property type="evidence" value="ECO:0007669"/>
    <property type="project" value="UniProtKB-KW"/>
</dbReference>
<dbReference type="GO" id="GO:0006508">
    <property type="term" value="P:proteolysis"/>
    <property type="evidence" value="ECO:0007669"/>
    <property type="project" value="UniProtKB-KW"/>
</dbReference>
<dbReference type="CDD" id="cd02248">
    <property type="entry name" value="Peptidase_C1A"/>
    <property type="match status" value="1"/>
</dbReference>
<dbReference type="FunFam" id="3.90.70.10:FF:000006">
    <property type="entry name" value="Cathepsin S"/>
    <property type="match status" value="1"/>
</dbReference>
<dbReference type="Gene3D" id="3.90.70.10">
    <property type="entry name" value="Cysteine proteinases"/>
    <property type="match status" value="1"/>
</dbReference>
<dbReference type="InterPro" id="IPR038765">
    <property type="entry name" value="Papain-like_cys_pep_sf"/>
</dbReference>
<dbReference type="InterPro" id="IPR025661">
    <property type="entry name" value="Pept_asp_AS"/>
</dbReference>
<dbReference type="InterPro" id="IPR000169">
    <property type="entry name" value="Pept_cys_AS"/>
</dbReference>
<dbReference type="InterPro" id="IPR025660">
    <property type="entry name" value="Pept_his_AS"/>
</dbReference>
<dbReference type="InterPro" id="IPR013128">
    <property type="entry name" value="Peptidase_C1A"/>
</dbReference>
<dbReference type="InterPro" id="IPR000668">
    <property type="entry name" value="Peptidase_C1A_C"/>
</dbReference>
<dbReference type="InterPro" id="IPR039417">
    <property type="entry name" value="Peptidase_C1A_papain-like"/>
</dbReference>
<dbReference type="InterPro" id="IPR013201">
    <property type="entry name" value="Prot_inhib_I29"/>
</dbReference>
<dbReference type="PANTHER" id="PTHR12411">
    <property type="entry name" value="CYSTEINE PROTEASE FAMILY C1-RELATED"/>
    <property type="match status" value="1"/>
</dbReference>
<dbReference type="Pfam" id="PF08246">
    <property type="entry name" value="Inhibitor_I29"/>
    <property type="match status" value="1"/>
</dbReference>
<dbReference type="Pfam" id="PF00112">
    <property type="entry name" value="Peptidase_C1"/>
    <property type="match status" value="1"/>
</dbReference>
<dbReference type="PRINTS" id="PR00705">
    <property type="entry name" value="PAPAIN"/>
</dbReference>
<dbReference type="SMART" id="SM00848">
    <property type="entry name" value="Inhibitor_I29"/>
    <property type="match status" value="1"/>
</dbReference>
<dbReference type="SMART" id="SM00645">
    <property type="entry name" value="Pept_C1"/>
    <property type="match status" value="1"/>
</dbReference>
<dbReference type="SUPFAM" id="SSF54001">
    <property type="entry name" value="Cysteine proteinases"/>
    <property type="match status" value="1"/>
</dbReference>
<dbReference type="PROSITE" id="PS00640">
    <property type="entry name" value="THIOL_PROTEASE_ASN"/>
    <property type="match status" value="1"/>
</dbReference>
<dbReference type="PROSITE" id="PS00139">
    <property type="entry name" value="THIOL_PROTEASE_CYS"/>
    <property type="match status" value="1"/>
</dbReference>
<dbReference type="PROSITE" id="PS00639">
    <property type="entry name" value="THIOL_PROTEASE_HIS"/>
    <property type="match status" value="1"/>
</dbReference>
<feature type="signal peptide" evidence="2">
    <location>
        <begin position="1"/>
        <end position="16"/>
    </location>
</feature>
<feature type="propeptide" id="PRO_0000223699" description="Activation peptide" evidence="2">
    <location>
        <begin position="17"/>
        <end status="unknown"/>
    </location>
</feature>
<feature type="chain" id="PRO_0000223700" description="Cathepsin L-like proteinase">
    <location>
        <begin status="unknown"/>
        <end position="324"/>
    </location>
</feature>
<feature type="active site" evidence="1">
    <location>
        <position position="134"/>
    </location>
</feature>
<feature type="active site" evidence="1">
    <location>
        <position position="270"/>
    </location>
</feature>
<feature type="active site" evidence="1">
    <location>
        <position position="290"/>
    </location>
</feature>
<feature type="disulfide bond" evidence="1">
    <location>
        <begin position="131"/>
        <end position="174"/>
    </location>
</feature>
<feature type="disulfide bond" evidence="1">
    <location>
        <begin position="165"/>
        <end position="206"/>
    </location>
</feature>
<feature type="disulfide bond" evidence="1">
    <location>
        <begin position="263"/>
        <end position="312"/>
    </location>
</feature>
<keyword id="KW-0222">Digestion</keyword>
<keyword id="KW-1015">Disulfide bond</keyword>
<keyword id="KW-0378">Hydrolase</keyword>
<keyword id="KW-0645">Protease</keyword>
<keyword id="KW-0732">Signal</keyword>
<keyword id="KW-0788">Thiol protease</keyword>
<keyword id="KW-0865">Zymogen</keyword>